<comment type="function">
    <text evidence="1">RNA-binding nucleolar protein required for pre-rRNA processing. Involved in production of 18S rRNA and assembly of small ribosomal subunit (By similarity).</text>
</comment>
<comment type="subcellular location">
    <subcellularLocation>
        <location evidence="1">Nucleus</location>
        <location evidence="1">Nucleolus</location>
    </subcellularLocation>
</comment>
<comment type="similarity">
    <text evidence="3">Belongs to the NOP9 family.</text>
</comment>
<gene>
    <name type="primary">NOP9</name>
    <name type="ORF">CTRG_04757</name>
</gene>
<keyword id="KW-0539">Nucleus</keyword>
<keyword id="KW-1185">Reference proteome</keyword>
<keyword id="KW-0677">Repeat</keyword>
<keyword id="KW-0690">Ribosome biogenesis</keyword>
<keyword id="KW-0698">rRNA processing</keyword>
<sequence>MAKSKSRGRRAEKKSKKEESSLVHDSEVPVQESGENSTPSGVPNTFFGLVDSNELDYFKQAESTLNINAFDSDEDRQGFINSVLEEAQGKELKLVTNQICSKLMERLILFANNKQLKKIFKQFSNHFVSLAFHKYSSHVLETLLVRSAALIEKELAQTEEEKHEEEEEGEDEKDDVPMEDLFISMLNEFKPHLTTMIDHSYASHVLRLLLLILAGKELPSTTTSNSTLRSKKSKIARKMIEIKDNEDFNRAFQTPESFKNELREYCQTISAGLDTKSARELSIHKIGSPVLQLLVQFEGLVDRERTFWHLIFCKDSEGKDSTEESFVEYLLSDSVGSHFLESIIKNDGARPKYLERLYKLYMKDRVLKLAKRSTNGVYIIQALLFKLKPVEVEFILDEIIPELSELISIAENQNLDLANKLIDASIIRGNYRRDEIIDQLFKKFAPNYNVENPQDHTTTEFIENILQLQGSTLGNTRDDWPTAEERKRALFLEKLMEYDYKFVICTWFNFMALPIERFIQMCFHGVFCHVVEKALIVEPEESKKVQILRKRLLNIFQGQIVGLACNSYGSHIVDTLWNFTVLLPMYKDRIASELFSESHKVKESTYGRLVWKNWGMELFSRKKYDWKALIKQQEVEYYGEDNEESTTSKRVKKPIELKLERLAEEKRRKEEQAEKAQSGYIKRKLDELTGSGPEKKQKLRGRNRN</sequence>
<name>NOP9_CANTT</name>
<evidence type="ECO:0000250" key="1"/>
<evidence type="ECO:0000256" key="2">
    <source>
        <dbReference type="SAM" id="MobiDB-lite"/>
    </source>
</evidence>
<evidence type="ECO:0000305" key="3"/>
<dbReference type="EMBL" id="GG692400">
    <property type="protein sequence ID" value="EER31974.1"/>
    <property type="molecule type" value="Genomic_DNA"/>
</dbReference>
<dbReference type="RefSeq" id="XP_002550459.1">
    <property type="nucleotide sequence ID" value="XM_002550413.1"/>
</dbReference>
<dbReference type="SMR" id="C5MFB4"/>
<dbReference type="STRING" id="294747.C5MFB4"/>
<dbReference type="EnsemblFungi" id="CTRG_04757-t43_1">
    <property type="protein sequence ID" value="CTRG_04757-t43_1-p1"/>
    <property type="gene ID" value="CTRG_04757"/>
</dbReference>
<dbReference type="GeneID" id="8298110"/>
<dbReference type="KEGG" id="ctp:CTRG_04757"/>
<dbReference type="VEuPathDB" id="FungiDB:CTRG_04757"/>
<dbReference type="eggNOG" id="KOG2188">
    <property type="taxonomic scope" value="Eukaryota"/>
</dbReference>
<dbReference type="HOGENOM" id="CLU_008720_1_1_1"/>
<dbReference type="OrthoDB" id="392571at2759"/>
<dbReference type="Proteomes" id="UP000002037">
    <property type="component" value="Unassembled WGS sequence"/>
</dbReference>
<dbReference type="GO" id="GO:0030686">
    <property type="term" value="C:90S preribosome"/>
    <property type="evidence" value="ECO:0007669"/>
    <property type="project" value="EnsemblFungi"/>
</dbReference>
<dbReference type="GO" id="GO:0005730">
    <property type="term" value="C:nucleolus"/>
    <property type="evidence" value="ECO:0007669"/>
    <property type="project" value="UniProtKB-SubCell"/>
</dbReference>
<dbReference type="GO" id="GO:0030688">
    <property type="term" value="C:preribosome, small subunit precursor"/>
    <property type="evidence" value="ECO:0007669"/>
    <property type="project" value="EnsemblFungi"/>
</dbReference>
<dbReference type="GO" id="GO:0032040">
    <property type="term" value="C:small-subunit processome"/>
    <property type="evidence" value="ECO:0007669"/>
    <property type="project" value="EnsemblFungi"/>
</dbReference>
<dbReference type="GO" id="GO:0003723">
    <property type="term" value="F:RNA binding"/>
    <property type="evidence" value="ECO:0007669"/>
    <property type="project" value="EnsemblFungi"/>
</dbReference>
<dbReference type="GO" id="GO:0000480">
    <property type="term" value="P:endonucleolytic cleavage in 5'-ETS of tricistronic rRNA transcript (SSU-rRNA, 5.8S rRNA, LSU-rRNA)"/>
    <property type="evidence" value="ECO:0007669"/>
    <property type="project" value="EnsemblFungi"/>
</dbReference>
<dbReference type="GO" id="GO:0000447">
    <property type="term" value="P:endonucleolytic cleavage in ITS1 to separate SSU-rRNA from 5.8S rRNA and LSU-rRNA from tricistronic rRNA transcript (SSU-rRNA, 5.8S rRNA, LSU-rRNA)"/>
    <property type="evidence" value="ECO:0007669"/>
    <property type="project" value="EnsemblFungi"/>
</dbReference>
<dbReference type="GO" id="GO:0000472">
    <property type="term" value="P:endonucleolytic cleavage to generate mature 5'-end of SSU-rRNA from (SSU-rRNA, 5.8S rRNA, LSU-rRNA)"/>
    <property type="evidence" value="ECO:0007669"/>
    <property type="project" value="EnsemblFungi"/>
</dbReference>
<dbReference type="GO" id="GO:0000056">
    <property type="term" value="P:ribosomal small subunit export from nucleus"/>
    <property type="evidence" value="ECO:0007669"/>
    <property type="project" value="EnsemblFungi"/>
</dbReference>
<dbReference type="Gene3D" id="1.25.10.10">
    <property type="entry name" value="Leucine-rich Repeat Variant"/>
    <property type="match status" value="3"/>
</dbReference>
<dbReference type="InterPro" id="IPR011989">
    <property type="entry name" value="ARM-like"/>
</dbReference>
<dbReference type="InterPro" id="IPR016024">
    <property type="entry name" value="ARM-type_fold"/>
</dbReference>
<dbReference type="InterPro" id="IPR040000">
    <property type="entry name" value="NOP9"/>
</dbReference>
<dbReference type="InterPro" id="IPR001313">
    <property type="entry name" value="Pumilio_RNA-bd_rpt"/>
</dbReference>
<dbReference type="PANTHER" id="PTHR13102">
    <property type="entry name" value="NUCLEOLAR PROTEIN 9"/>
    <property type="match status" value="1"/>
</dbReference>
<dbReference type="PANTHER" id="PTHR13102:SF0">
    <property type="entry name" value="NUCLEOLAR PROTEIN 9"/>
    <property type="match status" value="1"/>
</dbReference>
<dbReference type="Pfam" id="PF22493">
    <property type="entry name" value="PUF_NOP9"/>
    <property type="match status" value="1"/>
</dbReference>
<dbReference type="SMART" id="SM00025">
    <property type="entry name" value="Pumilio"/>
    <property type="match status" value="8"/>
</dbReference>
<dbReference type="SUPFAM" id="SSF48371">
    <property type="entry name" value="ARM repeat"/>
    <property type="match status" value="1"/>
</dbReference>
<protein>
    <recommendedName>
        <fullName>Nucleolar protein 9</fullName>
    </recommendedName>
    <alternativeName>
        <fullName>Pumilio domain-containing protein NOP9</fullName>
    </alternativeName>
</protein>
<proteinExistence type="inferred from homology"/>
<organism>
    <name type="scientific">Candida tropicalis (strain ATCC MYA-3404 / T1)</name>
    <name type="common">Yeast</name>
    <dbReference type="NCBI Taxonomy" id="294747"/>
    <lineage>
        <taxon>Eukaryota</taxon>
        <taxon>Fungi</taxon>
        <taxon>Dikarya</taxon>
        <taxon>Ascomycota</taxon>
        <taxon>Saccharomycotina</taxon>
        <taxon>Pichiomycetes</taxon>
        <taxon>Debaryomycetaceae</taxon>
        <taxon>Candida/Lodderomyces clade</taxon>
        <taxon>Candida</taxon>
    </lineage>
</organism>
<accession>C5MFB4</accession>
<feature type="chain" id="PRO_0000407807" description="Nucleolar protein 9">
    <location>
        <begin position="1"/>
        <end position="705"/>
    </location>
</feature>
<feature type="repeat" description="Pumilio 1">
    <location>
        <begin position="86"/>
        <end position="121"/>
    </location>
</feature>
<feature type="repeat" description="Pumilio 2">
    <location>
        <begin position="122"/>
        <end position="157"/>
    </location>
</feature>
<feature type="repeat" description="Pumilio 3">
    <location>
        <begin position="188"/>
        <end position="224"/>
    </location>
</feature>
<feature type="repeat" description="Pumilio 4">
    <location>
        <begin position="272"/>
        <end position="308"/>
    </location>
</feature>
<feature type="repeat" description="Pumilio 5">
    <location>
        <begin position="321"/>
        <end position="359"/>
    </location>
</feature>
<feature type="repeat" description="Pumilio 6">
    <location>
        <begin position="361"/>
        <end position="397"/>
    </location>
</feature>
<feature type="repeat" description="Pumilio 7">
    <location>
        <begin position="512"/>
        <end position="549"/>
    </location>
</feature>
<feature type="repeat" description="Pumilio 8">
    <location>
        <begin position="554"/>
        <end position="592"/>
    </location>
</feature>
<feature type="region of interest" description="Disordered" evidence="2">
    <location>
        <begin position="1"/>
        <end position="43"/>
    </location>
</feature>
<feature type="region of interest" description="Disordered" evidence="2">
    <location>
        <begin position="665"/>
        <end position="705"/>
    </location>
</feature>
<feature type="compositionally biased region" description="Basic residues" evidence="2">
    <location>
        <begin position="1"/>
        <end position="14"/>
    </location>
</feature>
<feature type="compositionally biased region" description="Basic and acidic residues" evidence="2">
    <location>
        <begin position="15"/>
        <end position="27"/>
    </location>
</feature>
<feature type="compositionally biased region" description="Polar residues" evidence="2">
    <location>
        <begin position="33"/>
        <end position="43"/>
    </location>
</feature>
<feature type="compositionally biased region" description="Basic and acidic residues" evidence="2">
    <location>
        <begin position="665"/>
        <end position="674"/>
    </location>
</feature>
<reference key="1">
    <citation type="journal article" date="2009" name="Nature">
        <title>Evolution of pathogenicity and sexual reproduction in eight Candida genomes.</title>
        <authorList>
            <person name="Butler G."/>
            <person name="Rasmussen M.D."/>
            <person name="Lin M.F."/>
            <person name="Santos M.A.S."/>
            <person name="Sakthikumar S."/>
            <person name="Munro C.A."/>
            <person name="Rheinbay E."/>
            <person name="Grabherr M."/>
            <person name="Forche A."/>
            <person name="Reedy J.L."/>
            <person name="Agrafioti I."/>
            <person name="Arnaud M.B."/>
            <person name="Bates S."/>
            <person name="Brown A.J.P."/>
            <person name="Brunke S."/>
            <person name="Costanzo M.C."/>
            <person name="Fitzpatrick D.A."/>
            <person name="de Groot P.W.J."/>
            <person name="Harris D."/>
            <person name="Hoyer L.L."/>
            <person name="Hube B."/>
            <person name="Klis F.M."/>
            <person name="Kodira C."/>
            <person name="Lennard N."/>
            <person name="Logue M.E."/>
            <person name="Martin R."/>
            <person name="Neiman A.M."/>
            <person name="Nikolaou E."/>
            <person name="Quail M.A."/>
            <person name="Quinn J."/>
            <person name="Santos M.C."/>
            <person name="Schmitzberger F.F."/>
            <person name="Sherlock G."/>
            <person name="Shah P."/>
            <person name="Silverstein K.A.T."/>
            <person name="Skrzypek M.S."/>
            <person name="Soll D."/>
            <person name="Staggs R."/>
            <person name="Stansfield I."/>
            <person name="Stumpf M.P.H."/>
            <person name="Sudbery P.E."/>
            <person name="Srikantha T."/>
            <person name="Zeng Q."/>
            <person name="Berman J."/>
            <person name="Berriman M."/>
            <person name="Heitman J."/>
            <person name="Gow N.A.R."/>
            <person name="Lorenz M.C."/>
            <person name="Birren B.W."/>
            <person name="Kellis M."/>
            <person name="Cuomo C.A."/>
        </authorList>
    </citation>
    <scope>NUCLEOTIDE SEQUENCE [LARGE SCALE GENOMIC DNA]</scope>
    <source>
        <strain>ATCC MYA-3404 / T1</strain>
    </source>
</reference>